<protein>
    <recommendedName>
        <fullName evidence="1">Ribosomal RNA large subunit methyltransferase H</fullName>
        <ecNumber evidence="1">2.1.1.177</ecNumber>
    </recommendedName>
    <alternativeName>
        <fullName evidence="1">23S rRNA (pseudouridine1915-N3)-methyltransferase</fullName>
    </alternativeName>
    <alternativeName>
        <fullName evidence="1">23S rRNA m3Psi1915 methyltransferase</fullName>
    </alternativeName>
    <alternativeName>
        <fullName evidence="1">rRNA (pseudouridine-N3-)-methyltransferase RlmH</fullName>
    </alternativeName>
</protein>
<dbReference type="EC" id="2.1.1.177" evidence="1"/>
<dbReference type="EMBL" id="CP000653">
    <property type="protein sequence ID" value="ABP59852.1"/>
    <property type="molecule type" value="Genomic_DNA"/>
</dbReference>
<dbReference type="RefSeq" id="WP_012016571.1">
    <property type="nucleotide sequence ID" value="NC_009436.1"/>
</dbReference>
<dbReference type="BMRB" id="A4W822"/>
<dbReference type="SMR" id="A4W822"/>
<dbReference type="STRING" id="399742.Ent638_1171"/>
<dbReference type="GeneID" id="93308253"/>
<dbReference type="KEGG" id="ent:Ent638_1171"/>
<dbReference type="eggNOG" id="COG1576">
    <property type="taxonomic scope" value="Bacteria"/>
</dbReference>
<dbReference type="HOGENOM" id="CLU_100552_1_0_6"/>
<dbReference type="OrthoDB" id="9806643at2"/>
<dbReference type="Proteomes" id="UP000000230">
    <property type="component" value="Chromosome"/>
</dbReference>
<dbReference type="GO" id="GO:0005737">
    <property type="term" value="C:cytoplasm"/>
    <property type="evidence" value="ECO:0007669"/>
    <property type="project" value="UniProtKB-SubCell"/>
</dbReference>
<dbReference type="GO" id="GO:0070038">
    <property type="term" value="F:rRNA (pseudouridine-N3-)-methyltransferase activity"/>
    <property type="evidence" value="ECO:0007669"/>
    <property type="project" value="UniProtKB-UniRule"/>
</dbReference>
<dbReference type="CDD" id="cd18081">
    <property type="entry name" value="RlmH-like"/>
    <property type="match status" value="1"/>
</dbReference>
<dbReference type="FunFam" id="3.40.1280.10:FF:000004">
    <property type="entry name" value="Ribosomal RNA large subunit methyltransferase H"/>
    <property type="match status" value="1"/>
</dbReference>
<dbReference type="Gene3D" id="3.40.1280.10">
    <property type="match status" value="1"/>
</dbReference>
<dbReference type="HAMAP" id="MF_00658">
    <property type="entry name" value="23SrRNA_methyltr_H"/>
    <property type="match status" value="1"/>
</dbReference>
<dbReference type="InterPro" id="IPR029028">
    <property type="entry name" value="Alpha/beta_knot_MTases"/>
</dbReference>
<dbReference type="InterPro" id="IPR003742">
    <property type="entry name" value="RlmH-like"/>
</dbReference>
<dbReference type="InterPro" id="IPR029026">
    <property type="entry name" value="tRNA_m1G_MTases_N"/>
</dbReference>
<dbReference type="NCBIfam" id="NF000984">
    <property type="entry name" value="PRK00103.1-1"/>
    <property type="match status" value="1"/>
</dbReference>
<dbReference type="NCBIfam" id="NF000986">
    <property type="entry name" value="PRK00103.1-4"/>
    <property type="match status" value="1"/>
</dbReference>
<dbReference type="NCBIfam" id="TIGR00246">
    <property type="entry name" value="tRNA_RlmH_YbeA"/>
    <property type="match status" value="1"/>
</dbReference>
<dbReference type="PANTHER" id="PTHR33603">
    <property type="entry name" value="METHYLTRANSFERASE"/>
    <property type="match status" value="1"/>
</dbReference>
<dbReference type="PANTHER" id="PTHR33603:SF1">
    <property type="entry name" value="RIBOSOMAL RNA LARGE SUBUNIT METHYLTRANSFERASE H"/>
    <property type="match status" value="1"/>
</dbReference>
<dbReference type="Pfam" id="PF02590">
    <property type="entry name" value="SPOUT_MTase"/>
    <property type="match status" value="1"/>
</dbReference>
<dbReference type="PIRSF" id="PIRSF004505">
    <property type="entry name" value="MT_bac"/>
    <property type="match status" value="1"/>
</dbReference>
<dbReference type="SUPFAM" id="SSF75217">
    <property type="entry name" value="alpha/beta knot"/>
    <property type="match status" value="1"/>
</dbReference>
<comment type="function">
    <text evidence="1">Specifically methylates the pseudouridine at position 1915 (m3Psi1915) in 23S rRNA.</text>
</comment>
<comment type="catalytic activity">
    <reaction evidence="1">
        <text>pseudouridine(1915) in 23S rRNA + S-adenosyl-L-methionine = N(3)-methylpseudouridine(1915) in 23S rRNA + S-adenosyl-L-homocysteine + H(+)</text>
        <dbReference type="Rhea" id="RHEA:42752"/>
        <dbReference type="Rhea" id="RHEA-COMP:10221"/>
        <dbReference type="Rhea" id="RHEA-COMP:10222"/>
        <dbReference type="ChEBI" id="CHEBI:15378"/>
        <dbReference type="ChEBI" id="CHEBI:57856"/>
        <dbReference type="ChEBI" id="CHEBI:59789"/>
        <dbReference type="ChEBI" id="CHEBI:65314"/>
        <dbReference type="ChEBI" id="CHEBI:74486"/>
        <dbReference type="EC" id="2.1.1.177"/>
    </reaction>
</comment>
<comment type="subunit">
    <text evidence="1">Homodimer.</text>
</comment>
<comment type="subcellular location">
    <subcellularLocation>
        <location evidence="1">Cytoplasm</location>
    </subcellularLocation>
</comment>
<comment type="similarity">
    <text evidence="1">Belongs to the RNA methyltransferase RlmH family.</text>
</comment>
<evidence type="ECO:0000255" key="1">
    <source>
        <dbReference type="HAMAP-Rule" id="MF_00658"/>
    </source>
</evidence>
<organism>
    <name type="scientific">Enterobacter sp. (strain 638)</name>
    <dbReference type="NCBI Taxonomy" id="399742"/>
    <lineage>
        <taxon>Bacteria</taxon>
        <taxon>Pseudomonadati</taxon>
        <taxon>Pseudomonadota</taxon>
        <taxon>Gammaproteobacteria</taxon>
        <taxon>Enterobacterales</taxon>
        <taxon>Enterobacteriaceae</taxon>
        <taxon>Enterobacter</taxon>
    </lineage>
</organism>
<accession>A4W822</accession>
<reference key="1">
    <citation type="journal article" date="2010" name="PLoS Genet.">
        <title>Genome sequence of the plant growth promoting endophytic bacterium Enterobacter sp. 638.</title>
        <authorList>
            <person name="Taghavi S."/>
            <person name="van der Lelie D."/>
            <person name="Hoffman A."/>
            <person name="Zhang Y.B."/>
            <person name="Walla M.D."/>
            <person name="Vangronsveld J."/>
            <person name="Newman L."/>
            <person name="Monchy S."/>
        </authorList>
    </citation>
    <scope>NUCLEOTIDE SEQUENCE [LARGE SCALE GENOMIC DNA]</scope>
    <source>
        <strain>638</strain>
    </source>
</reference>
<name>RLMH_ENT38</name>
<feature type="chain" id="PRO_1000061782" description="Ribosomal RNA large subunit methyltransferase H">
    <location>
        <begin position="1"/>
        <end position="155"/>
    </location>
</feature>
<feature type="binding site" evidence="1">
    <location>
        <position position="72"/>
    </location>
    <ligand>
        <name>S-adenosyl-L-methionine</name>
        <dbReference type="ChEBI" id="CHEBI:59789"/>
    </ligand>
</feature>
<feature type="binding site" evidence="1">
    <location>
        <position position="103"/>
    </location>
    <ligand>
        <name>S-adenosyl-L-methionine</name>
        <dbReference type="ChEBI" id="CHEBI:59789"/>
    </ligand>
</feature>
<feature type="binding site" evidence="1">
    <location>
        <begin position="122"/>
        <end position="127"/>
    </location>
    <ligand>
        <name>S-adenosyl-L-methionine</name>
        <dbReference type="ChEBI" id="CHEBI:59789"/>
    </ligand>
</feature>
<proteinExistence type="inferred from homology"/>
<keyword id="KW-0963">Cytoplasm</keyword>
<keyword id="KW-0489">Methyltransferase</keyword>
<keyword id="KW-0698">rRNA processing</keyword>
<keyword id="KW-0949">S-adenosyl-L-methionine</keyword>
<keyword id="KW-0808">Transferase</keyword>
<sequence>MKLQLVAVGTKMPDWVQTGFTEYLRRFPKDMPFELVEIPAGKRGKNADIKRILDKEGELMLAAAGKNRIVTLDIPGKPWDTPQLAQELERWKLDGRDVSLLIGGPEGLSSACKAAAEQSWSLSALTLPHPLVRVLVAESLYRAWSITTNHPYHRE</sequence>
<gene>
    <name evidence="1" type="primary">rlmH</name>
    <name type="ordered locus">Ent638_1171</name>
</gene>